<accession>B3DSX9</accession>
<reference key="1">
    <citation type="journal article" date="2008" name="BMC Genomics">
        <title>Comparative genomic analysis of the gut bacterium Bifidobacterium longum reveals loci susceptible to deletion during pure culture growth.</title>
        <authorList>
            <person name="Lee J.H."/>
            <person name="Karamychev V.N."/>
            <person name="Kozyavkin S.A."/>
            <person name="Mills D."/>
            <person name="Pavlov A.R."/>
            <person name="Pavlova N.V."/>
            <person name="Polouchine N.N."/>
            <person name="Richardson P.M."/>
            <person name="Shakhova V.V."/>
            <person name="Slesarev A.I."/>
            <person name="Weimer B."/>
            <person name="O'Sullivan D.J."/>
        </authorList>
    </citation>
    <scope>NUCLEOTIDE SEQUENCE [LARGE SCALE GENOMIC DNA]</scope>
    <source>
        <strain>DJO10A</strain>
    </source>
</reference>
<dbReference type="EC" id="6.1.1.1" evidence="1"/>
<dbReference type="EMBL" id="CP000605">
    <property type="protein sequence ID" value="ACD98248.1"/>
    <property type="molecule type" value="Genomic_DNA"/>
</dbReference>
<dbReference type="RefSeq" id="WP_007051155.1">
    <property type="nucleotide sequence ID" value="NZ_AABM02000002.1"/>
</dbReference>
<dbReference type="SMR" id="B3DSX9"/>
<dbReference type="GeneID" id="69577809"/>
<dbReference type="KEGG" id="blj:BLD_0802"/>
<dbReference type="HOGENOM" id="CLU_024003_0_3_11"/>
<dbReference type="Proteomes" id="UP000002419">
    <property type="component" value="Chromosome"/>
</dbReference>
<dbReference type="GO" id="GO:0005829">
    <property type="term" value="C:cytosol"/>
    <property type="evidence" value="ECO:0007669"/>
    <property type="project" value="TreeGrafter"/>
</dbReference>
<dbReference type="GO" id="GO:0005524">
    <property type="term" value="F:ATP binding"/>
    <property type="evidence" value="ECO:0007669"/>
    <property type="project" value="UniProtKB-UniRule"/>
</dbReference>
<dbReference type="GO" id="GO:0003723">
    <property type="term" value="F:RNA binding"/>
    <property type="evidence" value="ECO:0007669"/>
    <property type="project" value="UniProtKB-KW"/>
</dbReference>
<dbReference type="GO" id="GO:0004831">
    <property type="term" value="F:tyrosine-tRNA ligase activity"/>
    <property type="evidence" value="ECO:0007669"/>
    <property type="project" value="UniProtKB-UniRule"/>
</dbReference>
<dbReference type="GO" id="GO:0006437">
    <property type="term" value="P:tyrosyl-tRNA aminoacylation"/>
    <property type="evidence" value="ECO:0007669"/>
    <property type="project" value="UniProtKB-UniRule"/>
</dbReference>
<dbReference type="CDD" id="cd00165">
    <property type="entry name" value="S4"/>
    <property type="match status" value="1"/>
</dbReference>
<dbReference type="CDD" id="cd00805">
    <property type="entry name" value="TyrRS_core"/>
    <property type="match status" value="1"/>
</dbReference>
<dbReference type="FunFam" id="1.10.240.10:FF:000001">
    <property type="entry name" value="Tyrosine--tRNA ligase"/>
    <property type="match status" value="1"/>
</dbReference>
<dbReference type="Gene3D" id="3.40.50.620">
    <property type="entry name" value="HUPs"/>
    <property type="match status" value="1"/>
</dbReference>
<dbReference type="Gene3D" id="3.10.290.10">
    <property type="entry name" value="RNA-binding S4 domain"/>
    <property type="match status" value="1"/>
</dbReference>
<dbReference type="Gene3D" id="1.10.240.10">
    <property type="entry name" value="Tyrosyl-Transfer RNA Synthetase"/>
    <property type="match status" value="1"/>
</dbReference>
<dbReference type="HAMAP" id="MF_02006">
    <property type="entry name" value="Tyr_tRNA_synth_type1"/>
    <property type="match status" value="1"/>
</dbReference>
<dbReference type="InterPro" id="IPR001412">
    <property type="entry name" value="aa-tRNA-synth_I_CS"/>
</dbReference>
<dbReference type="InterPro" id="IPR002305">
    <property type="entry name" value="aa-tRNA-synth_Ic"/>
</dbReference>
<dbReference type="InterPro" id="IPR014729">
    <property type="entry name" value="Rossmann-like_a/b/a_fold"/>
</dbReference>
<dbReference type="InterPro" id="IPR036986">
    <property type="entry name" value="S4_RNA-bd_sf"/>
</dbReference>
<dbReference type="InterPro" id="IPR054608">
    <property type="entry name" value="SYY-like_C"/>
</dbReference>
<dbReference type="InterPro" id="IPR002307">
    <property type="entry name" value="Tyr-tRNA-ligase"/>
</dbReference>
<dbReference type="InterPro" id="IPR024088">
    <property type="entry name" value="Tyr-tRNA-ligase_bac-type"/>
</dbReference>
<dbReference type="InterPro" id="IPR024107">
    <property type="entry name" value="Tyr-tRNA-ligase_bac_1"/>
</dbReference>
<dbReference type="NCBIfam" id="TIGR00234">
    <property type="entry name" value="tyrS"/>
    <property type="match status" value="1"/>
</dbReference>
<dbReference type="PANTHER" id="PTHR11766:SF0">
    <property type="entry name" value="TYROSINE--TRNA LIGASE, MITOCHONDRIAL"/>
    <property type="match status" value="1"/>
</dbReference>
<dbReference type="PANTHER" id="PTHR11766">
    <property type="entry name" value="TYROSYL-TRNA SYNTHETASE"/>
    <property type="match status" value="1"/>
</dbReference>
<dbReference type="Pfam" id="PF22421">
    <property type="entry name" value="SYY_C-terminal"/>
    <property type="match status" value="1"/>
</dbReference>
<dbReference type="Pfam" id="PF00579">
    <property type="entry name" value="tRNA-synt_1b"/>
    <property type="match status" value="1"/>
</dbReference>
<dbReference type="PRINTS" id="PR01040">
    <property type="entry name" value="TRNASYNTHTYR"/>
</dbReference>
<dbReference type="SUPFAM" id="SSF55174">
    <property type="entry name" value="Alpha-L RNA-binding motif"/>
    <property type="match status" value="1"/>
</dbReference>
<dbReference type="SUPFAM" id="SSF52374">
    <property type="entry name" value="Nucleotidylyl transferase"/>
    <property type="match status" value="1"/>
</dbReference>
<dbReference type="PROSITE" id="PS00178">
    <property type="entry name" value="AA_TRNA_LIGASE_I"/>
    <property type="match status" value="1"/>
</dbReference>
<dbReference type="PROSITE" id="PS50889">
    <property type="entry name" value="S4"/>
    <property type="match status" value="1"/>
</dbReference>
<feature type="chain" id="PRO_1000189259" description="Tyrosine--tRNA ligase">
    <location>
        <begin position="1"/>
        <end position="440"/>
    </location>
</feature>
<feature type="domain" description="S4 RNA-binding" evidence="1">
    <location>
        <begin position="373"/>
        <end position="439"/>
    </location>
</feature>
<feature type="short sequence motif" description="'HIGH' region">
    <location>
        <begin position="51"/>
        <end position="60"/>
    </location>
</feature>
<feature type="short sequence motif" description="'KMSKS' region">
    <location>
        <begin position="241"/>
        <end position="245"/>
    </location>
</feature>
<feature type="binding site" evidence="1">
    <location>
        <position position="46"/>
    </location>
    <ligand>
        <name>L-tyrosine</name>
        <dbReference type="ChEBI" id="CHEBI:58315"/>
    </ligand>
</feature>
<feature type="binding site" evidence="1">
    <location>
        <position position="181"/>
    </location>
    <ligand>
        <name>L-tyrosine</name>
        <dbReference type="ChEBI" id="CHEBI:58315"/>
    </ligand>
</feature>
<feature type="binding site" evidence="1">
    <location>
        <position position="185"/>
    </location>
    <ligand>
        <name>L-tyrosine</name>
        <dbReference type="ChEBI" id="CHEBI:58315"/>
    </ligand>
</feature>
<feature type="binding site" evidence="1">
    <location>
        <position position="244"/>
    </location>
    <ligand>
        <name>ATP</name>
        <dbReference type="ChEBI" id="CHEBI:30616"/>
    </ligand>
</feature>
<keyword id="KW-0030">Aminoacyl-tRNA synthetase</keyword>
<keyword id="KW-0067">ATP-binding</keyword>
<keyword id="KW-0963">Cytoplasm</keyword>
<keyword id="KW-0436">Ligase</keyword>
<keyword id="KW-0547">Nucleotide-binding</keyword>
<keyword id="KW-0648">Protein biosynthesis</keyword>
<keyword id="KW-0694">RNA-binding</keyword>
<proteinExistence type="inferred from homology"/>
<name>SYY_BIFLD</name>
<sequence>MAHVTDFKEAGFNTLLEELEWRGLISQSTDRDRLAEALNGEPITYYCGFDPTAASLHIGNLVQLINMRHLQLAGHHPIALVGGATGLIGDPRQSGERTLNPKDVVAGWADRLKNQIGGILDTEGANAVRFVSNYDWTASMTVIDFLRDVGKNFRLGTMLAKDTVARRLNSEEGISFTEFSYQVLQGNDFLHLFDEYHCTLELGGSDQWGNLTSGLDLIHKVRGVDVNVFTSPIITDASGKKFGKSEGNAVWLDATMLSPYKFYQFWINRPDVEMESLLKAFTFLPKAEIERLVEESKTNPGKREAQKTLAWEVTSFVHGEAATQAAIDASGALFGRGGNLEDIDEETLESVLDGFKVVDENGEHVFPVSKPGDRVIDAAQAAGLFKSASEARRAIKSGGVYLNNNRIEDEEQVLAEADFLAGRFALIRRGKKALGAVENR</sequence>
<protein>
    <recommendedName>
        <fullName evidence="1">Tyrosine--tRNA ligase</fullName>
        <ecNumber evidence="1">6.1.1.1</ecNumber>
    </recommendedName>
    <alternativeName>
        <fullName evidence="1">Tyrosyl-tRNA synthetase</fullName>
        <shortName evidence="1">TyrRS</shortName>
    </alternativeName>
</protein>
<gene>
    <name evidence="1" type="primary">tyrS</name>
    <name type="ordered locus">BLD_0802</name>
</gene>
<comment type="function">
    <text evidence="1">Catalyzes the attachment of tyrosine to tRNA(Tyr) in a two-step reaction: tyrosine is first activated by ATP to form Tyr-AMP and then transferred to the acceptor end of tRNA(Tyr).</text>
</comment>
<comment type="catalytic activity">
    <reaction evidence="1">
        <text>tRNA(Tyr) + L-tyrosine + ATP = L-tyrosyl-tRNA(Tyr) + AMP + diphosphate + H(+)</text>
        <dbReference type="Rhea" id="RHEA:10220"/>
        <dbReference type="Rhea" id="RHEA-COMP:9706"/>
        <dbReference type="Rhea" id="RHEA-COMP:9707"/>
        <dbReference type="ChEBI" id="CHEBI:15378"/>
        <dbReference type="ChEBI" id="CHEBI:30616"/>
        <dbReference type="ChEBI" id="CHEBI:33019"/>
        <dbReference type="ChEBI" id="CHEBI:58315"/>
        <dbReference type="ChEBI" id="CHEBI:78442"/>
        <dbReference type="ChEBI" id="CHEBI:78536"/>
        <dbReference type="ChEBI" id="CHEBI:456215"/>
        <dbReference type="EC" id="6.1.1.1"/>
    </reaction>
</comment>
<comment type="subunit">
    <text evidence="1">Homodimer.</text>
</comment>
<comment type="subcellular location">
    <subcellularLocation>
        <location evidence="1">Cytoplasm</location>
    </subcellularLocation>
</comment>
<comment type="similarity">
    <text evidence="1">Belongs to the class-I aminoacyl-tRNA synthetase family. TyrS type 1 subfamily.</text>
</comment>
<evidence type="ECO:0000255" key="1">
    <source>
        <dbReference type="HAMAP-Rule" id="MF_02006"/>
    </source>
</evidence>
<organism>
    <name type="scientific">Bifidobacterium longum (strain DJO10A)</name>
    <dbReference type="NCBI Taxonomy" id="205913"/>
    <lineage>
        <taxon>Bacteria</taxon>
        <taxon>Bacillati</taxon>
        <taxon>Actinomycetota</taxon>
        <taxon>Actinomycetes</taxon>
        <taxon>Bifidobacteriales</taxon>
        <taxon>Bifidobacteriaceae</taxon>
        <taxon>Bifidobacterium</taxon>
    </lineage>
</organism>